<protein>
    <recommendedName>
        <fullName evidence="1">Lysine--tRNA ligase</fullName>
        <ecNumber evidence="1">6.1.1.6</ecNumber>
    </recommendedName>
    <alternativeName>
        <fullName evidence="1">Lysyl-tRNA synthetase</fullName>
        <shortName evidence="1">LysRS</shortName>
    </alternativeName>
</protein>
<evidence type="ECO:0000255" key="1">
    <source>
        <dbReference type="HAMAP-Rule" id="MF_00252"/>
    </source>
</evidence>
<reference key="1">
    <citation type="journal article" date="2009" name="PLoS ONE">
        <title>The complete genome of Teredinibacter turnerae T7901: an intracellular endosymbiont of marine wood-boring bivalves (shipworms).</title>
        <authorList>
            <person name="Yang J.C."/>
            <person name="Madupu R."/>
            <person name="Durkin A.S."/>
            <person name="Ekborg N.A."/>
            <person name="Pedamallu C.S."/>
            <person name="Hostetler J.B."/>
            <person name="Radune D."/>
            <person name="Toms B.S."/>
            <person name="Henrissat B."/>
            <person name="Coutinho P.M."/>
            <person name="Schwarz S."/>
            <person name="Field L."/>
            <person name="Trindade-Silva A.E."/>
            <person name="Soares C.A.G."/>
            <person name="Elshahawi S."/>
            <person name="Hanora A."/>
            <person name="Schmidt E.W."/>
            <person name="Haygood M.G."/>
            <person name="Posfai J."/>
            <person name="Benner J."/>
            <person name="Madinger C."/>
            <person name="Nove J."/>
            <person name="Anton B."/>
            <person name="Chaudhary K."/>
            <person name="Foster J."/>
            <person name="Holman A."/>
            <person name="Kumar S."/>
            <person name="Lessard P.A."/>
            <person name="Luyten Y.A."/>
            <person name="Slatko B."/>
            <person name="Wood N."/>
            <person name="Wu B."/>
            <person name="Teplitski M."/>
            <person name="Mougous J.D."/>
            <person name="Ward N."/>
            <person name="Eisen J.A."/>
            <person name="Badger J.H."/>
            <person name="Distel D.L."/>
        </authorList>
    </citation>
    <scope>NUCLEOTIDE SEQUENCE [LARGE SCALE GENOMIC DNA]</scope>
    <source>
        <strain>ATCC 39867 / T7901</strain>
    </source>
</reference>
<name>SYK_TERTT</name>
<comment type="catalytic activity">
    <reaction evidence="1">
        <text>tRNA(Lys) + L-lysine + ATP = L-lysyl-tRNA(Lys) + AMP + diphosphate</text>
        <dbReference type="Rhea" id="RHEA:20792"/>
        <dbReference type="Rhea" id="RHEA-COMP:9696"/>
        <dbReference type="Rhea" id="RHEA-COMP:9697"/>
        <dbReference type="ChEBI" id="CHEBI:30616"/>
        <dbReference type="ChEBI" id="CHEBI:32551"/>
        <dbReference type="ChEBI" id="CHEBI:33019"/>
        <dbReference type="ChEBI" id="CHEBI:78442"/>
        <dbReference type="ChEBI" id="CHEBI:78529"/>
        <dbReference type="ChEBI" id="CHEBI:456215"/>
        <dbReference type="EC" id="6.1.1.6"/>
    </reaction>
</comment>
<comment type="cofactor">
    <cofactor evidence="1">
        <name>Mg(2+)</name>
        <dbReference type="ChEBI" id="CHEBI:18420"/>
    </cofactor>
    <text evidence="1">Binds 3 Mg(2+) ions per subunit.</text>
</comment>
<comment type="subunit">
    <text evidence="1">Homodimer.</text>
</comment>
<comment type="subcellular location">
    <subcellularLocation>
        <location evidence="1">Cytoplasm</location>
    </subcellularLocation>
</comment>
<comment type="similarity">
    <text evidence="1">Belongs to the class-II aminoacyl-tRNA synthetase family.</text>
</comment>
<proteinExistence type="inferred from homology"/>
<keyword id="KW-0030">Aminoacyl-tRNA synthetase</keyword>
<keyword id="KW-0067">ATP-binding</keyword>
<keyword id="KW-0963">Cytoplasm</keyword>
<keyword id="KW-0436">Ligase</keyword>
<keyword id="KW-0460">Magnesium</keyword>
<keyword id="KW-0479">Metal-binding</keyword>
<keyword id="KW-0547">Nucleotide-binding</keyword>
<keyword id="KW-0648">Protein biosynthesis</keyword>
<keyword id="KW-1185">Reference proteome</keyword>
<gene>
    <name evidence="1" type="primary">lysS</name>
    <name type="ordered locus">TERTU_1172</name>
</gene>
<dbReference type="EC" id="6.1.1.6" evidence="1"/>
<dbReference type="EMBL" id="CP001614">
    <property type="protein sequence ID" value="ACR14403.1"/>
    <property type="molecule type" value="Genomic_DNA"/>
</dbReference>
<dbReference type="RefSeq" id="WP_015820518.1">
    <property type="nucleotide sequence ID" value="NC_012997.1"/>
</dbReference>
<dbReference type="SMR" id="C5BRM0"/>
<dbReference type="STRING" id="377629.TERTU_1172"/>
<dbReference type="KEGG" id="ttu:TERTU_1172"/>
<dbReference type="eggNOG" id="COG1190">
    <property type="taxonomic scope" value="Bacteria"/>
</dbReference>
<dbReference type="HOGENOM" id="CLU_008255_6_0_6"/>
<dbReference type="OrthoDB" id="9802326at2"/>
<dbReference type="Proteomes" id="UP000009080">
    <property type="component" value="Chromosome"/>
</dbReference>
<dbReference type="GO" id="GO:0005829">
    <property type="term" value="C:cytosol"/>
    <property type="evidence" value="ECO:0007669"/>
    <property type="project" value="TreeGrafter"/>
</dbReference>
<dbReference type="GO" id="GO:0005524">
    <property type="term" value="F:ATP binding"/>
    <property type="evidence" value="ECO:0007669"/>
    <property type="project" value="UniProtKB-UniRule"/>
</dbReference>
<dbReference type="GO" id="GO:0004824">
    <property type="term" value="F:lysine-tRNA ligase activity"/>
    <property type="evidence" value="ECO:0007669"/>
    <property type="project" value="UniProtKB-UniRule"/>
</dbReference>
<dbReference type="GO" id="GO:0000287">
    <property type="term" value="F:magnesium ion binding"/>
    <property type="evidence" value="ECO:0007669"/>
    <property type="project" value="UniProtKB-UniRule"/>
</dbReference>
<dbReference type="GO" id="GO:0000049">
    <property type="term" value="F:tRNA binding"/>
    <property type="evidence" value="ECO:0007669"/>
    <property type="project" value="TreeGrafter"/>
</dbReference>
<dbReference type="GO" id="GO:0006430">
    <property type="term" value="P:lysyl-tRNA aminoacylation"/>
    <property type="evidence" value="ECO:0007669"/>
    <property type="project" value="UniProtKB-UniRule"/>
</dbReference>
<dbReference type="CDD" id="cd00775">
    <property type="entry name" value="LysRS_core"/>
    <property type="match status" value="1"/>
</dbReference>
<dbReference type="CDD" id="cd04322">
    <property type="entry name" value="LysRS_N"/>
    <property type="match status" value="1"/>
</dbReference>
<dbReference type="FunFam" id="2.40.50.140:FF:000024">
    <property type="entry name" value="Lysine--tRNA ligase"/>
    <property type="match status" value="1"/>
</dbReference>
<dbReference type="FunFam" id="3.30.930.10:FF:000001">
    <property type="entry name" value="Lysine--tRNA ligase"/>
    <property type="match status" value="1"/>
</dbReference>
<dbReference type="Gene3D" id="3.30.930.10">
    <property type="entry name" value="Bira Bifunctional Protein, Domain 2"/>
    <property type="match status" value="1"/>
</dbReference>
<dbReference type="Gene3D" id="2.40.50.140">
    <property type="entry name" value="Nucleic acid-binding proteins"/>
    <property type="match status" value="1"/>
</dbReference>
<dbReference type="HAMAP" id="MF_00252">
    <property type="entry name" value="Lys_tRNA_synth_class2"/>
    <property type="match status" value="1"/>
</dbReference>
<dbReference type="InterPro" id="IPR004364">
    <property type="entry name" value="Aa-tRNA-synt_II"/>
</dbReference>
<dbReference type="InterPro" id="IPR006195">
    <property type="entry name" value="aa-tRNA-synth_II"/>
</dbReference>
<dbReference type="InterPro" id="IPR045864">
    <property type="entry name" value="aa-tRNA-synth_II/BPL/LPL"/>
</dbReference>
<dbReference type="InterPro" id="IPR002313">
    <property type="entry name" value="Lys-tRNA-ligase_II"/>
</dbReference>
<dbReference type="InterPro" id="IPR044136">
    <property type="entry name" value="Lys-tRNA-ligase_II_N"/>
</dbReference>
<dbReference type="InterPro" id="IPR018149">
    <property type="entry name" value="Lys-tRNA-synth_II_C"/>
</dbReference>
<dbReference type="InterPro" id="IPR012340">
    <property type="entry name" value="NA-bd_OB-fold"/>
</dbReference>
<dbReference type="InterPro" id="IPR004365">
    <property type="entry name" value="NA-bd_OB_tRNA"/>
</dbReference>
<dbReference type="NCBIfam" id="TIGR00499">
    <property type="entry name" value="lysS_bact"/>
    <property type="match status" value="1"/>
</dbReference>
<dbReference type="NCBIfam" id="NF001756">
    <property type="entry name" value="PRK00484.1"/>
    <property type="match status" value="1"/>
</dbReference>
<dbReference type="PANTHER" id="PTHR42918:SF15">
    <property type="entry name" value="LYSINE--TRNA LIGASE, CHLOROPLASTIC_MITOCHONDRIAL"/>
    <property type="match status" value="1"/>
</dbReference>
<dbReference type="PANTHER" id="PTHR42918">
    <property type="entry name" value="LYSYL-TRNA SYNTHETASE"/>
    <property type="match status" value="1"/>
</dbReference>
<dbReference type="Pfam" id="PF00152">
    <property type="entry name" value="tRNA-synt_2"/>
    <property type="match status" value="1"/>
</dbReference>
<dbReference type="Pfam" id="PF01336">
    <property type="entry name" value="tRNA_anti-codon"/>
    <property type="match status" value="1"/>
</dbReference>
<dbReference type="PRINTS" id="PR00982">
    <property type="entry name" value="TRNASYNTHLYS"/>
</dbReference>
<dbReference type="SUPFAM" id="SSF55681">
    <property type="entry name" value="Class II aaRS and biotin synthetases"/>
    <property type="match status" value="1"/>
</dbReference>
<dbReference type="SUPFAM" id="SSF50249">
    <property type="entry name" value="Nucleic acid-binding proteins"/>
    <property type="match status" value="1"/>
</dbReference>
<dbReference type="PROSITE" id="PS50862">
    <property type="entry name" value="AA_TRNA_LIGASE_II"/>
    <property type="match status" value="1"/>
</dbReference>
<sequence length="498" mass="56348">MSEQNQAADAQQDENKLIAERRAKLAELRAVGNPFPNDFRPTHHADALQQAHGSKEKAALEEAAMVVSVAGRVIRNRGAFMVLQDGSGQIQLYVTKEARGFAKSLDLGDIIGVSGVLHKSGKGDLYVNLDEYKLLTKALRPLPDKYHGLADQELRYRQRYVDLIANPEVRKTFLLRSRIVQFIRDYLNGREFLEVETPMLQAIPGGATARPFETHHNALDIDMYLRIAPELYLKRLVVGGFERVYEINRNFRNEGLSTRHNPEFTMLEFYQAYADYNDLMDLTEDMLRNLAQTVLGSTEVTATLGEDESVTYDFAKPFVRLSVFDSILHFNPDLKAEDIDSPESARAVAKNLGIPMKDNWGLGKVQIEIFEKTVEHRLIQPTFITEYPTEVSPLARRNDDNPFVTDRFEFFVGGREIANGFSELNDAEDQADRFKQQVAEKNAGDDEAMHYDADYVRALEYGLPPTAGEGIGIDRLVMLLTDSASIRDVLLFPHMRPE</sequence>
<feature type="chain" id="PRO_1000204575" description="Lysine--tRNA ligase">
    <location>
        <begin position="1"/>
        <end position="498"/>
    </location>
</feature>
<feature type="binding site" evidence="1">
    <location>
        <position position="409"/>
    </location>
    <ligand>
        <name>Mg(2+)</name>
        <dbReference type="ChEBI" id="CHEBI:18420"/>
        <label>1</label>
    </ligand>
</feature>
<feature type="binding site" evidence="1">
    <location>
        <position position="416"/>
    </location>
    <ligand>
        <name>Mg(2+)</name>
        <dbReference type="ChEBI" id="CHEBI:18420"/>
        <label>1</label>
    </ligand>
</feature>
<feature type="binding site" evidence="1">
    <location>
        <position position="416"/>
    </location>
    <ligand>
        <name>Mg(2+)</name>
        <dbReference type="ChEBI" id="CHEBI:18420"/>
        <label>2</label>
    </ligand>
</feature>
<organism>
    <name type="scientific">Teredinibacter turnerae (strain ATCC 39867 / T7901)</name>
    <dbReference type="NCBI Taxonomy" id="377629"/>
    <lineage>
        <taxon>Bacteria</taxon>
        <taxon>Pseudomonadati</taxon>
        <taxon>Pseudomonadota</taxon>
        <taxon>Gammaproteobacteria</taxon>
        <taxon>Cellvibrionales</taxon>
        <taxon>Cellvibrionaceae</taxon>
        <taxon>Teredinibacter</taxon>
    </lineage>
</organism>
<accession>C5BRM0</accession>